<keyword id="KW-0067">ATP-binding</keyword>
<keyword id="KW-0963">Cytoplasm</keyword>
<keyword id="KW-0418">Kinase</keyword>
<keyword id="KW-0520">NAD</keyword>
<keyword id="KW-0521">NADP</keyword>
<keyword id="KW-0547">Nucleotide-binding</keyword>
<keyword id="KW-1185">Reference proteome</keyword>
<keyword id="KW-0808">Transferase</keyword>
<gene>
    <name evidence="1" type="primary">nadK</name>
    <name type="ordered locus">Hhal_1479</name>
</gene>
<proteinExistence type="inferred from homology"/>
<sequence length="307" mass="33397">MDEHPPPPFPTVGIIGKPGDPAIAGLVERLLPMLEARGCTALLDEQSMPETGDDRHPQRVSRETLLDACDLIIAIGGDGTLIHIARAVAGRRDVALMGINRGRLGFLVDIAPEHLDEVAQILDGQHVVDERLLLHAEIRSNEDDTLLREDVAINEVVLHRWNTARMIELVTRIDGEPLSDHRSDGLILATPTGSTAYAMAGGGPIVHPNLHAMLLVPVCPHTLSNRPLVVDGSSRIEIDVHPRFIEHVRVSCDSQNDLTLQAGSRLVVRAHPSPVRLVHPPGYSYFNLLRAKLGWGGPLCNIEPFGA</sequence>
<reference key="1">
    <citation type="submission" date="2006-12" db="EMBL/GenBank/DDBJ databases">
        <title>Complete sequence of Halorhodospira halophila SL1.</title>
        <authorList>
            <consortium name="US DOE Joint Genome Institute"/>
            <person name="Copeland A."/>
            <person name="Lucas S."/>
            <person name="Lapidus A."/>
            <person name="Barry K."/>
            <person name="Detter J.C."/>
            <person name="Glavina del Rio T."/>
            <person name="Hammon N."/>
            <person name="Israni S."/>
            <person name="Dalin E."/>
            <person name="Tice H."/>
            <person name="Pitluck S."/>
            <person name="Saunders E."/>
            <person name="Brettin T."/>
            <person name="Bruce D."/>
            <person name="Han C."/>
            <person name="Tapia R."/>
            <person name="Schmutz J."/>
            <person name="Larimer F."/>
            <person name="Land M."/>
            <person name="Hauser L."/>
            <person name="Kyrpides N."/>
            <person name="Mikhailova N."/>
            <person name="Hoff W."/>
            <person name="Richardson P."/>
        </authorList>
    </citation>
    <scope>NUCLEOTIDE SEQUENCE [LARGE SCALE GENOMIC DNA]</scope>
    <source>
        <strain>DSM 244 / SL1</strain>
    </source>
</reference>
<comment type="function">
    <text evidence="1">Involved in the regulation of the intracellular balance of NAD and NADP, and is a key enzyme in the biosynthesis of NADP. Catalyzes specifically the phosphorylation on 2'-hydroxyl of the adenosine moiety of NAD to yield NADP.</text>
</comment>
<comment type="catalytic activity">
    <reaction evidence="1">
        <text>NAD(+) + ATP = ADP + NADP(+) + H(+)</text>
        <dbReference type="Rhea" id="RHEA:18629"/>
        <dbReference type="ChEBI" id="CHEBI:15378"/>
        <dbReference type="ChEBI" id="CHEBI:30616"/>
        <dbReference type="ChEBI" id="CHEBI:57540"/>
        <dbReference type="ChEBI" id="CHEBI:58349"/>
        <dbReference type="ChEBI" id="CHEBI:456216"/>
        <dbReference type="EC" id="2.7.1.23"/>
    </reaction>
</comment>
<comment type="cofactor">
    <cofactor evidence="1">
        <name>a divalent metal cation</name>
        <dbReference type="ChEBI" id="CHEBI:60240"/>
    </cofactor>
</comment>
<comment type="subcellular location">
    <subcellularLocation>
        <location evidence="1">Cytoplasm</location>
    </subcellularLocation>
</comment>
<comment type="similarity">
    <text evidence="1">Belongs to the NAD kinase family.</text>
</comment>
<evidence type="ECO:0000255" key="1">
    <source>
        <dbReference type="HAMAP-Rule" id="MF_00361"/>
    </source>
</evidence>
<protein>
    <recommendedName>
        <fullName evidence="1">NAD kinase</fullName>
        <ecNumber evidence="1">2.7.1.23</ecNumber>
    </recommendedName>
    <alternativeName>
        <fullName evidence="1">ATP-dependent NAD kinase</fullName>
    </alternativeName>
</protein>
<organism>
    <name type="scientific">Halorhodospira halophila (strain DSM 244 / SL1)</name>
    <name type="common">Ectothiorhodospira halophila (strain DSM 244 / SL1)</name>
    <dbReference type="NCBI Taxonomy" id="349124"/>
    <lineage>
        <taxon>Bacteria</taxon>
        <taxon>Pseudomonadati</taxon>
        <taxon>Pseudomonadota</taxon>
        <taxon>Gammaproteobacteria</taxon>
        <taxon>Chromatiales</taxon>
        <taxon>Ectothiorhodospiraceae</taxon>
        <taxon>Halorhodospira</taxon>
    </lineage>
</organism>
<accession>A1WX34</accession>
<feature type="chain" id="PRO_1000005413" description="NAD kinase">
    <location>
        <begin position="1"/>
        <end position="307"/>
    </location>
</feature>
<feature type="active site" description="Proton acceptor" evidence="1">
    <location>
        <position position="78"/>
    </location>
</feature>
<feature type="binding site" evidence="1">
    <location>
        <begin position="78"/>
        <end position="79"/>
    </location>
    <ligand>
        <name>NAD(+)</name>
        <dbReference type="ChEBI" id="CHEBI:57540"/>
    </ligand>
</feature>
<feature type="binding site" evidence="1">
    <location>
        <position position="83"/>
    </location>
    <ligand>
        <name>NAD(+)</name>
        <dbReference type="ChEBI" id="CHEBI:57540"/>
    </ligand>
</feature>
<feature type="binding site" evidence="1">
    <location>
        <begin position="154"/>
        <end position="155"/>
    </location>
    <ligand>
        <name>NAD(+)</name>
        <dbReference type="ChEBI" id="CHEBI:57540"/>
    </ligand>
</feature>
<feature type="binding site" evidence="1">
    <location>
        <position position="165"/>
    </location>
    <ligand>
        <name>NAD(+)</name>
        <dbReference type="ChEBI" id="CHEBI:57540"/>
    </ligand>
</feature>
<feature type="binding site" evidence="1">
    <location>
        <position position="182"/>
    </location>
    <ligand>
        <name>NAD(+)</name>
        <dbReference type="ChEBI" id="CHEBI:57540"/>
    </ligand>
</feature>
<feature type="binding site" evidence="1">
    <location>
        <position position="184"/>
    </location>
    <ligand>
        <name>NAD(+)</name>
        <dbReference type="ChEBI" id="CHEBI:57540"/>
    </ligand>
</feature>
<feature type="binding site" evidence="1">
    <location>
        <position position="255"/>
    </location>
    <ligand>
        <name>NAD(+)</name>
        <dbReference type="ChEBI" id="CHEBI:57540"/>
    </ligand>
</feature>
<dbReference type="EC" id="2.7.1.23" evidence="1"/>
<dbReference type="EMBL" id="CP000544">
    <property type="protein sequence ID" value="ABM62246.1"/>
    <property type="molecule type" value="Genomic_DNA"/>
</dbReference>
<dbReference type="RefSeq" id="WP_011814268.1">
    <property type="nucleotide sequence ID" value="NC_008789.1"/>
</dbReference>
<dbReference type="SMR" id="A1WX34"/>
<dbReference type="STRING" id="349124.Hhal_1479"/>
<dbReference type="KEGG" id="hha:Hhal_1479"/>
<dbReference type="eggNOG" id="COG0061">
    <property type="taxonomic scope" value="Bacteria"/>
</dbReference>
<dbReference type="HOGENOM" id="CLU_008831_0_1_6"/>
<dbReference type="OrthoDB" id="9774737at2"/>
<dbReference type="Proteomes" id="UP000000647">
    <property type="component" value="Chromosome"/>
</dbReference>
<dbReference type="GO" id="GO:0005737">
    <property type="term" value="C:cytoplasm"/>
    <property type="evidence" value="ECO:0007669"/>
    <property type="project" value="UniProtKB-SubCell"/>
</dbReference>
<dbReference type="GO" id="GO:0005524">
    <property type="term" value="F:ATP binding"/>
    <property type="evidence" value="ECO:0007669"/>
    <property type="project" value="UniProtKB-KW"/>
</dbReference>
<dbReference type="GO" id="GO:0046872">
    <property type="term" value="F:metal ion binding"/>
    <property type="evidence" value="ECO:0007669"/>
    <property type="project" value="UniProtKB-UniRule"/>
</dbReference>
<dbReference type="GO" id="GO:0051287">
    <property type="term" value="F:NAD binding"/>
    <property type="evidence" value="ECO:0007669"/>
    <property type="project" value="UniProtKB-ARBA"/>
</dbReference>
<dbReference type="GO" id="GO:0003951">
    <property type="term" value="F:NAD+ kinase activity"/>
    <property type="evidence" value="ECO:0007669"/>
    <property type="project" value="UniProtKB-UniRule"/>
</dbReference>
<dbReference type="GO" id="GO:0019674">
    <property type="term" value="P:NAD metabolic process"/>
    <property type="evidence" value="ECO:0007669"/>
    <property type="project" value="InterPro"/>
</dbReference>
<dbReference type="GO" id="GO:0006741">
    <property type="term" value="P:NADP biosynthetic process"/>
    <property type="evidence" value="ECO:0007669"/>
    <property type="project" value="UniProtKB-UniRule"/>
</dbReference>
<dbReference type="Gene3D" id="3.40.50.10330">
    <property type="entry name" value="Probable inorganic polyphosphate/atp-NAD kinase, domain 1"/>
    <property type="match status" value="1"/>
</dbReference>
<dbReference type="Gene3D" id="2.60.200.30">
    <property type="entry name" value="Probable inorganic polyphosphate/atp-NAD kinase, domain 2"/>
    <property type="match status" value="1"/>
</dbReference>
<dbReference type="HAMAP" id="MF_00361">
    <property type="entry name" value="NAD_kinase"/>
    <property type="match status" value="1"/>
</dbReference>
<dbReference type="InterPro" id="IPR017438">
    <property type="entry name" value="ATP-NAD_kinase_N"/>
</dbReference>
<dbReference type="InterPro" id="IPR017437">
    <property type="entry name" value="ATP-NAD_kinase_PpnK-typ_C"/>
</dbReference>
<dbReference type="InterPro" id="IPR016064">
    <property type="entry name" value="NAD/diacylglycerol_kinase_sf"/>
</dbReference>
<dbReference type="InterPro" id="IPR002504">
    <property type="entry name" value="NADK"/>
</dbReference>
<dbReference type="NCBIfam" id="NF002306">
    <property type="entry name" value="PRK01231.1"/>
    <property type="match status" value="1"/>
</dbReference>
<dbReference type="PANTHER" id="PTHR20275">
    <property type="entry name" value="NAD KINASE"/>
    <property type="match status" value="1"/>
</dbReference>
<dbReference type="PANTHER" id="PTHR20275:SF0">
    <property type="entry name" value="NAD KINASE"/>
    <property type="match status" value="1"/>
</dbReference>
<dbReference type="Pfam" id="PF01513">
    <property type="entry name" value="NAD_kinase"/>
    <property type="match status" value="1"/>
</dbReference>
<dbReference type="Pfam" id="PF20143">
    <property type="entry name" value="NAD_kinase_C"/>
    <property type="match status" value="1"/>
</dbReference>
<dbReference type="SUPFAM" id="SSF111331">
    <property type="entry name" value="NAD kinase/diacylglycerol kinase-like"/>
    <property type="match status" value="1"/>
</dbReference>
<name>NADK_HALHL</name>